<protein>
    <recommendedName>
        <fullName evidence="7">U-actitoxin-Oulsp2</fullName>
        <shortName evidence="5">U-AITX-Oulsp2</shortName>
    </recommendedName>
    <alternativeName>
        <fullName evidence="5">OspTx2b</fullName>
    </alternativeName>
</protein>
<proteinExistence type="evidence at protein level"/>
<reference key="1">
    <citation type="journal article" date="2018" name="Toxicon">
        <title>Synthesis, folding, structure and activity of a predicted peptide from the sea anemone Oulactis sp. with an ShKT fold.</title>
        <authorList>
            <person name="Krishnarjuna B."/>
            <person name="Villegas-Moreno J."/>
            <person name="Mitchell M.L."/>
            <person name="Csoti A."/>
            <person name="Peigneur S."/>
            <person name="Amero C."/>
            <person name="Pennington M.W."/>
            <person name="Tytgat J."/>
            <person name="Panyi G."/>
            <person name="Norton R.S."/>
        </authorList>
    </citation>
    <scope>NUCLEOTIDE SEQUENCE [MRNA]</scope>
    <scope>SYNTHESIS OF 47-82</scope>
    <scope>STRUCTURE BY NMR OF 47-82</scope>
    <scope>DISULFIDE BOND</scope>
    <source>
        <strain>MM-2018</strain>
    </source>
</reference>
<organism>
    <name type="scientific">Oulactis sp.</name>
    <name type="common">Sea anemone</name>
    <dbReference type="NCBI Taxonomy" id="2093647"/>
    <lineage>
        <taxon>Eukaryota</taxon>
        <taxon>Metazoa</taxon>
        <taxon>Cnidaria</taxon>
        <taxon>Anthozoa</taxon>
        <taxon>Hexacorallia</taxon>
        <taxon>Actiniaria</taxon>
        <taxon>Actiniidae</taxon>
        <taxon>Oulactis</taxon>
    </lineage>
</organism>
<name>K1B2_OULSP</name>
<accession>A0A330KUG5</accession>
<accession>A0A384E124</accession>
<comment type="function">
    <text evidence="4">Probable toxin with unknown function. In contrast to similar toxins, this toxin does not inhibit voltage-gated potassium channels (tested at 100 nM). Does not show antimicrobial activities against bacteria and yeasts.</text>
</comment>
<comment type="subcellular location">
    <subcellularLocation>
        <location evidence="7">Secreted</location>
    </subcellularLocation>
    <subcellularLocation>
        <location evidence="7">Nematocyst</location>
    </subcellularLocation>
</comment>
<comment type="miscellaneous">
    <text evidence="4">The 52-Leu-Pro-53 bond exists only in the trans-isomerization.</text>
</comment>
<comment type="miscellaneous">
    <text evidence="4">Negative results: has no effect on hKv1.1/KCNA1, hKv1.2/KCNA2, hKv1.3/KCNA3, hKv11.1/KCNH2/ERG1, hKCa1.1/KCNMA1, hKCa3.1/KCNN4, and hNav1.4/SCN4A (when tested at 100 nM).</text>
</comment>
<comment type="similarity">
    <text evidence="6">Belongs to the sea anemone type 1 potassium channel toxin family. Type 1b subfamily.</text>
</comment>
<dbReference type="EMBL" id="LT985997">
    <property type="protein sequence ID" value="SPF25672.1"/>
    <property type="molecule type" value="mRNA"/>
</dbReference>
<dbReference type="PDB" id="6BUC">
    <property type="method" value="NMR"/>
    <property type="chains" value="A=47-82"/>
</dbReference>
<dbReference type="PDBsum" id="6BUC"/>
<dbReference type="SMR" id="A0A330KUG5"/>
<dbReference type="GO" id="GO:0005576">
    <property type="term" value="C:extracellular region"/>
    <property type="evidence" value="ECO:0007669"/>
    <property type="project" value="UniProtKB-SubCell"/>
</dbReference>
<dbReference type="GO" id="GO:0042151">
    <property type="term" value="C:nematocyst"/>
    <property type="evidence" value="ECO:0007669"/>
    <property type="project" value="UniProtKB-SubCell"/>
</dbReference>
<dbReference type="GO" id="GO:0090729">
    <property type="term" value="F:toxin activity"/>
    <property type="evidence" value="ECO:0007669"/>
    <property type="project" value="UniProtKB-KW"/>
</dbReference>
<dbReference type="InterPro" id="IPR003582">
    <property type="entry name" value="ShKT_dom"/>
</dbReference>
<dbReference type="Pfam" id="PF01549">
    <property type="entry name" value="ShK"/>
    <property type="match status" value="1"/>
</dbReference>
<dbReference type="SUPFAM" id="SSF57546">
    <property type="entry name" value="Crisp domain-like"/>
    <property type="match status" value="1"/>
</dbReference>
<dbReference type="PROSITE" id="PS51670">
    <property type="entry name" value="SHKT"/>
    <property type="match status" value="1"/>
</dbReference>
<keyword id="KW-0002">3D-structure</keyword>
<keyword id="KW-0165">Cleavage on pair of basic residues</keyword>
<keyword id="KW-1015">Disulfide bond</keyword>
<keyword id="KW-0166">Nematocyst</keyword>
<keyword id="KW-0964">Secreted</keyword>
<keyword id="KW-0732">Signal</keyword>
<keyword id="KW-0800">Toxin</keyword>
<sequence length="82" mass="9151">MNTKLVVVFLLSAILFVSVTASRPGKDLERDEAYETYDDERPYFKRACKDNLPAATCSNVKANNNCSSEKYKTNCAKTCGEC</sequence>
<feature type="signal peptide" evidence="2">
    <location>
        <begin position="1"/>
        <end position="21"/>
    </location>
</feature>
<feature type="propeptide" id="PRO_0000448545" evidence="6">
    <location>
        <begin position="22"/>
        <end position="46"/>
    </location>
</feature>
<feature type="chain" id="PRO_5016428214" description="U-actitoxin-Oulsp2" evidence="7">
    <location>
        <begin position="47"/>
        <end position="82"/>
    </location>
</feature>
<feature type="domain" description="ShKT" evidence="3">
    <location>
        <begin position="48"/>
        <end position="82"/>
    </location>
</feature>
<feature type="region of interest" description="Theoritically crucial for binding to potassium channels" evidence="1">
    <location>
        <begin position="70"/>
        <end position="71"/>
    </location>
</feature>
<feature type="disulfide bond" evidence="4 8">
    <location>
        <begin position="48"/>
        <end position="82"/>
    </location>
</feature>
<feature type="disulfide bond" evidence="4 8">
    <location>
        <begin position="57"/>
        <end position="75"/>
    </location>
</feature>
<feature type="disulfide bond" evidence="4 8">
    <location>
        <begin position="66"/>
        <end position="79"/>
    </location>
</feature>
<feature type="helix" evidence="9">
    <location>
        <begin position="54"/>
        <end position="62"/>
    </location>
</feature>
<feature type="helix" evidence="9">
    <location>
        <begin position="65"/>
        <end position="67"/>
    </location>
</feature>
<feature type="turn" evidence="9">
    <location>
        <begin position="69"/>
        <end position="74"/>
    </location>
</feature>
<feature type="helix" evidence="9">
    <location>
        <begin position="76"/>
        <end position="79"/>
    </location>
</feature>
<evidence type="ECO:0000250" key="1">
    <source>
        <dbReference type="UniProtKB" id="P29186"/>
    </source>
</evidence>
<evidence type="ECO:0000255" key="2"/>
<evidence type="ECO:0000255" key="3">
    <source>
        <dbReference type="PROSITE-ProRule" id="PRU01005"/>
    </source>
</evidence>
<evidence type="ECO:0000269" key="4">
    <source>
    </source>
</evidence>
<evidence type="ECO:0000303" key="5">
    <source>
    </source>
</evidence>
<evidence type="ECO:0000305" key="6"/>
<evidence type="ECO:0000305" key="7">
    <source>
    </source>
</evidence>
<evidence type="ECO:0007744" key="8">
    <source>
        <dbReference type="PDB" id="6BUC"/>
    </source>
</evidence>
<evidence type="ECO:0007829" key="9">
    <source>
        <dbReference type="PDB" id="6BUC"/>
    </source>
</evidence>